<proteinExistence type="inferred from homology"/>
<sequence length="119" mass="13201">MNQNQLPKRSDEPIFWGLFGAGGMWSAIVSPAIIILLGILIPMGIAPEAFTYDRIMAFSQGFIGRIFLLLMIILPVWCALHRIHHTLHDFKVHVPASNWVFYGAAAIISVIAIIGVFTL</sequence>
<name>FRDD_PROMH</name>
<gene>
    <name evidence="1" type="primary">frdD</name>
    <name type="ordered locus">PMI3585</name>
</gene>
<dbReference type="EMBL" id="AM942759">
    <property type="protein sequence ID" value="CAR47019.1"/>
    <property type="molecule type" value="Genomic_DNA"/>
</dbReference>
<dbReference type="RefSeq" id="WP_004245412.1">
    <property type="nucleotide sequence ID" value="NC_010554.1"/>
</dbReference>
<dbReference type="SMR" id="B4EWY4"/>
<dbReference type="EnsemblBacteria" id="CAR47019">
    <property type="protein sequence ID" value="CAR47019"/>
    <property type="gene ID" value="PMI3585"/>
</dbReference>
<dbReference type="GeneID" id="6802591"/>
<dbReference type="KEGG" id="pmr:PMI3585"/>
<dbReference type="eggNOG" id="COG3080">
    <property type="taxonomic scope" value="Bacteria"/>
</dbReference>
<dbReference type="HOGENOM" id="CLU_168367_0_0_6"/>
<dbReference type="Proteomes" id="UP000008319">
    <property type="component" value="Chromosome"/>
</dbReference>
<dbReference type="GO" id="GO:0045283">
    <property type="term" value="C:fumarate reductase complex"/>
    <property type="evidence" value="ECO:0007669"/>
    <property type="project" value="UniProtKB-UniRule"/>
</dbReference>
<dbReference type="GO" id="GO:0005886">
    <property type="term" value="C:plasma membrane"/>
    <property type="evidence" value="ECO:0007669"/>
    <property type="project" value="UniProtKB-SubCell"/>
</dbReference>
<dbReference type="GO" id="GO:0000104">
    <property type="term" value="F:succinate dehydrogenase activity"/>
    <property type="evidence" value="ECO:0007669"/>
    <property type="project" value="UniProtKB-UniRule"/>
</dbReference>
<dbReference type="GO" id="GO:0006106">
    <property type="term" value="P:fumarate metabolic process"/>
    <property type="evidence" value="ECO:0007669"/>
    <property type="project" value="InterPro"/>
</dbReference>
<dbReference type="CDD" id="cd00547">
    <property type="entry name" value="QFR_TypeD_subunitD"/>
    <property type="match status" value="1"/>
</dbReference>
<dbReference type="Gene3D" id="1.20.1300.10">
    <property type="entry name" value="Fumarate reductase/succinate dehydrogenase, transmembrane subunit"/>
    <property type="match status" value="1"/>
</dbReference>
<dbReference type="HAMAP" id="MF_00709">
    <property type="entry name" value="Fumarate_red_D"/>
    <property type="match status" value="1"/>
</dbReference>
<dbReference type="InterPro" id="IPR003418">
    <property type="entry name" value="Fumarate_red_D"/>
</dbReference>
<dbReference type="InterPro" id="IPR034804">
    <property type="entry name" value="SQR/QFR_C/D"/>
</dbReference>
<dbReference type="NCBIfam" id="NF003977">
    <property type="entry name" value="PRK05470.1-1"/>
    <property type="match status" value="1"/>
</dbReference>
<dbReference type="Pfam" id="PF02313">
    <property type="entry name" value="Fumarate_red_D"/>
    <property type="match status" value="1"/>
</dbReference>
<dbReference type="PIRSF" id="PIRSF000179">
    <property type="entry name" value="FrdD"/>
    <property type="match status" value="1"/>
</dbReference>
<dbReference type="SUPFAM" id="SSF81343">
    <property type="entry name" value="Fumarate reductase respiratory complex transmembrane subunits"/>
    <property type="match status" value="1"/>
</dbReference>
<accession>B4EWY4</accession>
<feature type="chain" id="PRO_1000132407" description="Fumarate reductase subunit D">
    <location>
        <begin position="1"/>
        <end position="119"/>
    </location>
</feature>
<feature type="transmembrane region" description="Helical" evidence="1">
    <location>
        <begin position="27"/>
        <end position="47"/>
    </location>
</feature>
<feature type="transmembrane region" description="Helical" evidence="1">
    <location>
        <begin position="61"/>
        <end position="81"/>
    </location>
</feature>
<feature type="transmembrane region" description="Helical" evidence="1">
    <location>
        <begin position="99"/>
        <end position="119"/>
    </location>
</feature>
<organism>
    <name type="scientific">Proteus mirabilis (strain HI4320)</name>
    <dbReference type="NCBI Taxonomy" id="529507"/>
    <lineage>
        <taxon>Bacteria</taxon>
        <taxon>Pseudomonadati</taxon>
        <taxon>Pseudomonadota</taxon>
        <taxon>Gammaproteobacteria</taxon>
        <taxon>Enterobacterales</taxon>
        <taxon>Morganellaceae</taxon>
        <taxon>Proteus</taxon>
    </lineage>
</organism>
<evidence type="ECO:0000255" key="1">
    <source>
        <dbReference type="HAMAP-Rule" id="MF_00709"/>
    </source>
</evidence>
<keyword id="KW-0997">Cell inner membrane</keyword>
<keyword id="KW-1003">Cell membrane</keyword>
<keyword id="KW-0472">Membrane</keyword>
<keyword id="KW-1185">Reference proteome</keyword>
<keyword id="KW-0812">Transmembrane</keyword>
<keyword id="KW-1133">Transmembrane helix</keyword>
<comment type="function">
    <text evidence="1">Two distinct, membrane-bound, FAD-containing enzymes are responsible for the catalysis of fumarate and succinate interconversion; fumarate reductase is used in anaerobic growth, and succinate dehydrogenase is used in aerobic growth. Anchors the catalytic components of the fumarate reductase complex to the cell inner membrane, binds quinones.</text>
</comment>
<comment type="subunit">
    <text evidence="1">Part of an enzyme complex containing four subunits: a flavoprotein (FrdA), an iron-sulfur protein (FrdB), and two hydrophobic anchor proteins (FrdC and FrdD).</text>
</comment>
<comment type="subcellular location">
    <subcellularLocation>
        <location evidence="1">Cell inner membrane</location>
        <topology evidence="1">Multi-pass membrane protein</topology>
    </subcellularLocation>
</comment>
<comment type="similarity">
    <text evidence="1">Belongs to the FrdD family.</text>
</comment>
<protein>
    <recommendedName>
        <fullName evidence="1">Fumarate reductase subunit D</fullName>
    </recommendedName>
    <alternativeName>
        <fullName evidence="1">Fumarate reductase 13 kDa hydrophobic protein</fullName>
    </alternativeName>
    <alternativeName>
        <fullName evidence="1">Quinol-fumarate reductase subunit D</fullName>
        <shortName evidence="1">QFR subunit D</shortName>
    </alternativeName>
</protein>
<reference key="1">
    <citation type="journal article" date="2008" name="J. Bacteriol.">
        <title>Complete genome sequence of uropathogenic Proteus mirabilis, a master of both adherence and motility.</title>
        <authorList>
            <person name="Pearson M.M."/>
            <person name="Sebaihia M."/>
            <person name="Churcher C."/>
            <person name="Quail M.A."/>
            <person name="Seshasayee A.S."/>
            <person name="Luscombe N.M."/>
            <person name="Abdellah Z."/>
            <person name="Arrosmith C."/>
            <person name="Atkin B."/>
            <person name="Chillingworth T."/>
            <person name="Hauser H."/>
            <person name="Jagels K."/>
            <person name="Moule S."/>
            <person name="Mungall K."/>
            <person name="Norbertczak H."/>
            <person name="Rabbinowitsch E."/>
            <person name="Walker D."/>
            <person name="Whithead S."/>
            <person name="Thomson N.R."/>
            <person name="Rather P.N."/>
            <person name="Parkhill J."/>
            <person name="Mobley H.L.T."/>
        </authorList>
    </citation>
    <scope>NUCLEOTIDE SEQUENCE [LARGE SCALE GENOMIC DNA]</scope>
    <source>
        <strain>HI4320</strain>
    </source>
</reference>